<gene>
    <name type="primary">Anxa4</name>
    <name type="synonym">Anx4</name>
</gene>
<name>ANXA4_RAT</name>
<evidence type="ECO:0000250" key="1"/>
<evidence type="ECO:0000250" key="2">
    <source>
        <dbReference type="UniProtKB" id="P08132"/>
    </source>
</evidence>
<evidence type="ECO:0000250" key="3">
    <source>
        <dbReference type="UniProtKB" id="P09525"/>
    </source>
</evidence>
<evidence type="ECO:0000250" key="4">
    <source>
        <dbReference type="UniProtKB" id="P50994"/>
    </source>
</evidence>
<evidence type="ECO:0000255" key="5">
    <source>
        <dbReference type="PROSITE-ProRule" id="PRU01245"/>
    </source>
</evidence>
<evidence type="ECO:0000305" key="6"/>
<evidence type="ECO:0007829" key="7">
    <source>
        <dbReference type="PDB" id="2ZHJ"/>
    </source>
</evidence>
<feature type="chain" id="PRO_0000067485" description="Annexin A4">
    <location>
        <begin position="1"/>
        <end position="319"/>
    </location>
</feature>
<feature type="repeat" description="Annexin 1" evidence="5">
    <location>
        <begin position="14"/>
        <end position="85"/>
    </location>
</feature>
<feature type="repeat" description="Annexin 2" evidence="5">
    <location>
        <begin position="86"/>
        <end position="157"/>
    </location>
</feature>
<feature type="repeat" description="Annexin 3" evidence="5">
    <location>
        <begin position="169"/>
        <end position="241"/>
    </location>
</feature>
<feature type="repeat" description="Annexin 4" evidence="5">
    <location>
        <begin position="245"/>
        <end position="316"/>
    </location>
</feature>
<feature type="modified residue" description="Phosphothreonine" evidence="2">
    <location>
        <position position="7"/>
    </location>
</feature>
<feature type="modified residue" description="Phosphoserine" evidence="3">
    <location>
        <position position="12"/>
    </location>
</feature>
<feature type="modified residue" description="N6-acetyllysine" evidence="3">
    <location>
        <position position="213"/>
    </location>
</feature>
<feature type="modified residue" description="N6-acetyllysine" evidence="3">
    <location>
        <position position="293"/>
    </location>
</feature>
<feature type="modified residue" description="N6-acetyllysine" evidence="3">
    <location>
        <position position="300"/>
    </location>
</feature>
<feature type="helix" evidence="7">
    <location>
        <begin position="16"/>
        <end position="27"/>
    </location>
</feature>
<feature type="strand" evidence="7">
    <location>
        <begin position="28"/>
        <end position="31"/>
    </location>
</feature>
<feature type="helix" evidence="7">
    <location>
        <begin position="34"/>
        <end position="41"/>
    </location>
</feature>
<feature type="helix" evidence="7">
    <location>
        <begin position="46"/>
        <end position="60"/>
    </location>
</feature>
<feature type="helix" evidence="7">
    <location>
        <begin position="64"/>
        <end position="71"/>
    </location>
</feature>
<feature type="helix" evidence="7">
    <location>
        <begin position="74"/>
        <end position="84"/>
    </location>
</feature>
<feature type="helix" evidence="7">
    <location>
        <begin position="87"/>
        <end position="99"/>
    </location>
</feature>
<feature type="strand" evidence="7">
    <location>
        <begin position="100"/>
        <end position="102"/>
    </location>
</feature>
<feature type="helix" evidence="7">
    <location>
        <begin position="106"/>
        <end position="115"/>
    </location>
</feature>
<feature type="helix" evidence="7">
    <location>
        <begin position="118"/>
        <end position="132"/>
    </location>
</feature>
<feature type="helix" evidence="7">
    <location>
        <begin position="136"/>
        <end position="143"/>
    </location>
</feature>
<feature type="helix" evidence="7">
    <location>
        <begin position="146"/>
        <end position="157"/>
    </location>
</feature>
<feature type="helix" evidence="7">
    <location>
        <begin position="168"/>
        <end position="181"/>
    </location>
</feature>
<feature type="turn" evidence="7">
    <location>
        <begin position="182"/>
        <end position="184"/>
    </location>
</feature>
<feature type="strand" evidence="7">
    <location>
        <begin position="185"/>
        <end position="187"/>
    </location>
</feature>
<feature type="helix" evidence="7">
    <location>
        <begin position="190"/>
        <end position="199"/>
    </location>
</feature>
<feature type="helix" evidence="7">
    <location>
        <begin position="202"/>
        <end position="216"/>
    </location>
</feature>
<feature type="helix" evidence="7">
    <location>
        <begin position="220"/>
        <end position="227"/>
    </location>
</feature>
<feature type="helix" evidence="7">
    <location>
        <begin position="230"/>
        <end position="244"/>
    </location>
</feature>
<feature type="helix" evidence="7">
    <location>
        <begin position="246"/>
        <end position="258"/>
    </location>
</feature>
<feature type="strand" evidence="7">
    <location>
        <begin position="259"/>
        <end position="262"/>
    </location>
</feature>
<feature type="helix" evidence="7">
    <location>
        <begin position="265"/>
        <end position="275"/>
    </location>
</feature>
<feature type="turn" evidence="7">
    <location>
        <begin position="276"/>
        <end position="278"/>
    </location>
</feature>
<feature type="helix" evidence="7">
    <location>
        <begin position="280"/>
        <end position="291"/>
    </location>
</feature>
<feature type="helix" evidence="7">
    <location>
        <begin position="295"/>
        <end position="302"/>
    </location>
</feature>
<feature type="helix" evidence="7">
    <location>
        <begin position="305"/>
        <end position="315"/>
    </location>
</feature>
<keyword id="KW-0002">3D-structure</keyword>
<keyword id="KW-0007">Acetylation</keyword>
<keyword id="KW-0041">Annexin</keyword>
<keyword id="KW-0106">Calcium</keyword>
<keyword id="KW-0111">Calcium/phospholipid-binding</keyword>
<keyword id="KW-0968">Cytoplasmic vesicle</keyword>
<keyword id="KW-0472">Membrane</keyword>
<keyword id="KW-0597">Phosphoprotein</keyword>
<keyword id="KW-1185">Reference proteome</keyword>
<keyword id="KW-0677">Repeat</keyword>
<proteinExistence type="evidence at protein level"/>
<reference key="1">
    <citation type="journal article" date="2002" name="Biochim. Biophys. Acta">
        <title>Cloning and characterization of ZAP36, an annexin-like, zymogen granule membrane associated protein, in exocrine pancreas.</title>
        <authorList>
            <person name="Fukuoka S."/>
            <person name="Horst K."/>
            <person name="Kazuki-Sugino R."/>
            <person name="Ikeda Y."/>
        </authorList>
    </citation>
    <scope>NUCLEOTIDE SEQUENCE [MRNA]</scope>
    <source>
        <strain>Wistar</strain>
        <tissue>Pancreas</tissue>
    </source>
</reference>
<accession>P55260</accession>
<organism>
    <name type="scientific">Rattus norvegicus</name>
    <name type="common">Rat</name>
    <dbReference type="NCBI Taxonomy" id="10116"/>
    <lineage>
        <taxon>Eukaryota</taxon>
        <taxon>Metazoa</taxon>
        <taxon>Chordata</taxon>
        <taxon>Craniata</taxon>
        <taxon>Vertebrata</taxon>
        <taxon>Euteleostomi</taxon>
        <taxon>Mammalia</taxon>
        <taxon>Eutheria</taxon>
        <taxon>Euarchontoglires</taxon>
        <taxon>Glires</taxon>
        <taxon>Rodentia</taxon>
        <taxon>Myomorpha</taxon>
        <taxon>Muroidea</taxon>
        <taxon>Muridae</taxon>
        <taxon>Murinae</taxon>
        <taxon>Rattus</taxon>
    </lineage>
</organism>
<protein>
    <recommendedName>
        <fullName>Annexin A4</fullName>
    </recommendedName>
    <alternativeName>
        <fullName>36 kDa zymogen granule membrane-associated protein</fullName>
        <shortName>ZAP36</shortName>
    </alternativeName>
    <alternativeName>
        <fullName>Annexin IV</fullName>
    </alternativeName>
    <alternativeName>
        <fullName>Annexin-4</fullName>
    </alternativeName>
    <alternativeName>
        <fullName>Lipocortin IV</fullName>
    </alternativeName>
</protein>
<sequence length="319" mass="35849">METKGGTVKAASGFNATEDAQVLRKAMKGLGTDEDAIIGVLACRNTAQRQEIRTAYKSTIGRDLLEDLKSELSSNFEQVILGMMTPTVLYDVQELRRAMKGAGTDEGCLIEILASRNPEEIRRINQTYQQQYGRSLEEDICSDTSFMFQRVLVSLTAGGRDEGNYLDDALVRQDAQDLYEAGEKRWGTDEVKFLSILCSRNRNHLLHVFDEYKRISQKDIEQSIKSETSGSFEDALLAIVKCMRNKPAYFAERLYKSMKGLGTDDSTLIRVMVSRAEIDMLDIPANFKRVYGKSLYSFIKGDTSGDYRKVLLILCGGDD</sequence>
<comment type="function">
    <text evidence="1">Calcium/phospholipid-binding protein which promotes membrane fusion and is involved in exocytosis.</text>
</comment>
<comment type="subcellular location">
    <subcellularLocation>
        <location evidence="4">Zymogen granule membrane</location>
        <topology evidence="4">Peripheral membrane protein</topology>
    </subcellularLocation>
</comment>
<comment type="domain">
    <text>A pair of annexin repeats may form one binding site for calcium and phospholipid.</text>
</comment>
<comment type="miscellaneous">
    <text evidence="1">Seems to bind one calcium ion with high affinity.</text>
</comment>
<comment type="similarity">
    <text evidence="5 6">Belongs to the annexin family.</text>
</comment>
<dbReference type="EMBL" id="D38224">
    <property type="protein sequence ID" value="BAA07399.2"/>
    <property type="molecule type" value="mRNA"/>
</dbReference>
<dbReference type="PDB" id="2ZHI">
    <property type="method" value="X-ray"/>
    <property type="resolution" value="1.58 A"/>
    <property type="chains" value="A=1-319"/>
</dbReference>
<dbReference type="PDB" id="2ZHJ">
    <property type="method" value="X-ray"/>
    <property type="resolution" value="1.35 A"/>
    <property type="chains" value="A=1-319"/>
</dbReference>
<dbReference type="PDBsum" id="2ZHI"/>
<dbReference type="PDBsum" id="2ZHJ"/>
<dbReference type="SMR" id="P55260"/>
<dbReference type="FunCoup" id="P55260">
    <property type="interactions" value="2044"/>
</dbReference>
<dbReference type="STRING" id="10116.ENSRNOP00000024436"/>
<dbReference type="GlyGen" id="P55260">
    <property type="glycosylation" value="1 site, 1 O-linked glycan (1 site)"/>
</dbReference>
<dbReference type="iPTMnet" id="P55260"/>
<dbReference type="PhosphoSitePlus" id="P55260"/>
<dbReference type="jPOST" id="P55260"/>
<dbReference type="PaxDb" id="10116-ENSRNOP00000024436"/>
<dbReference type="UCSC" id="RGD:621171">
    <property type="organism name" value="rat"/>
</dbReference>
<dbReference type="AGR" id="RGD:621171"/>
<dbReference type="RGD" id="621171">
    <property type="gene designation" value="Anxa4"/>
</dbReference>
<dbReference type="eggNOG" id="KOG0819">
    <property type="taxonomic scope" value="Eukaryota"/>
</dbReference>
<dbReference type="InParanoid" id="P55260"/>
<dbReference type="PhylomeDB" id="P55260"/>
<dbReference type="EvolutionaryTrace" id="P55260"/>
<dbReference type="PRO" id="PR:P55260"/>
<dbReference type="Proteomes" id="UP000002494">
    <property type="component" value="Unplaced"/>
</dbReference>
<dbReference type="GO" id="GO:0009986">
    <property type="term" value="C:cell surface"/>
    <property type="evidence" value="ECO:0000266"/>
    <property type="project" value="RGD"/>
</dbReference>
<dbReference type="GO" id="GO:0005737">
    <property type="term" value="C:cytoplasm"/>
    <property type="evidence" value="ECO:0000266"/>
    <property type="project" value="RGD"/>
</dbReference>
<dbReference type="GO" id="GO:0031965">
    <property type="term" value="C:nuclear membrane"/>
    <property type="evidence" value="ECO:0000266"/>
    <property type="project" value="RGD"/>
</dbReference>
<dbReference type="GO" id="GO:0005634">
    <property type="term" value="C:nucleus"/>
    <property type="evidence" value="ECO:0000266"/>
    <property type="project" value="RGD"/>
</dbReference>
<dbReference type="GO" id="GO:0048471">
    <property type="term" value="C:perinuclear region of cytoplasm"/>
    <property type="evidence" value="ECO:0000266"/>
    <property type="project" value="RGD"/>
</dbReference>
<dbReference type="GO" id="GO:0005886">
    <property type="term" value="C:plasma membrane"/>
    <property type="evidence" value="ECO:0000266"/>
    <property type="project" value="RGD"/>
</dbReference>
<dbReference type="GO" id="GO:0012506">
    <property type="term" value="C:vesicle membrane"/>
    <property type="evidence" value="ECO:0000266"/>
    <property type="project" value="RGD"/>
</dbReference>
<dbReference type="GO" id="GO:0042589">
    <property type="term" value="C:zymogen granule membrane"/>
    <property type="evidence" value="ECO:0007669"/>
    <property type="project" value="UniProtKB-SubCell"/>
</dbReference>
<dbReference type="GO" id="GO:0005509">
    <property type="term" value="F:calcium ion binding"/>
    <property type="evidence" value="ECO:0000266"/>
    <property type="project" value="RGD"/>
</dbReference>
<dbReference type="GO" id="GO:0005544">
    <property type="term" value="F:calcium-dependent phospholipid binding"/>
    <property type="evidence" value="ECO:0000266"/>
    <property type="project" value="RGD"/>
</dbReference>
<dbReference type="GO" id="GO:0048306">
    <property type="term" value="F:calcium-dependent protein binding"/>
    <property type="evidence" value="ECO:0000266"/>
    <property type="project" value="RGD"/>
</dbReference>
<dbReference type="GO" id="GO:0042802">
    <property type="term" value="F:identical protein binding"/>
    <property type="evidence" value="ECO:0000266"/>
    <property type="project" value="RGD"/>
</dbReference>
<dbReference type="GO" id="GO:0051059">
    <property type="term" value="F:NF-kappaB binding"/>
    <property type="evidence" value="ECO:0000266"/>
    <property type="project" value="RGD"/>
</dbReference>
<dbReference type="GO" id="GO:0001786">
    <property type="term" value="F:phosphatidylserine binding"/>
    <property type="evidence" value="ECO:0000318"/>
    <property type="project" value="GO_Central"/>
</dbReference>
<dbReference type="GO" id="GO:0030855">
    <property type="term" value="P:epithelial cell differentiation"/>
    <property type="evidence" value="ECO:0000266"/>
    <property type="project" value="RGD"/>
</dbReference>
<dbReference type="GO" id="GO:0006887">
    <property type="term" value="P:exocytosis"/>
    <property type="evidence" value="ECO:0000303"/>
    <property type="project" value="RGD"/>
</dbReference>
<dbReference type="GO" id="GO:0032717">
    <property type="term" value="P:negative regulation of interleukin-8 production"/>
    <property type="evidence" value="ECO:0000266"/>
    <property type="project" value="RGD"/>
</dbReference>
<dbReference type="GO" id="GO:0007219">
    <property type="term" value="P:Notch signaling pathway"/>
    <property type="evidence" value="ECO:0000266"/>
    <property type="project" value="RGD"/>
</dbReference>
<dbReference type="GO" id="GO:0006357">
    <property type="term" value="P:regulation of transcription by RNA polymerase II"/>
    <property type="evidence" value="ECO:0000266"/>
    <property type="project" value="RGD"/>
</dbReference>
<dbReference type="FunFam" id="1.10.220.10:FF:000002">
    <property type="entry name" value="Annexin"/>
    <property type="match status" value="1"/>
</dbReference>
<dbReference type="FunFam" id="1.10.220.10:FF:000003">
    <property type="entry name" value="Annexin"/>
    <property type="match status" value="1"/>
</dbReference>
<dbReference type="FunFam" id="1.10.220.10:FF:000004">
    <property type="entry name" value="Annexin"/>
    <property type="match status" value="1"/>
</dbReference>
<dbReference type="FunFam" id="1.10.220.10:FF:000022">
    <property type="entry name" value="Annexin A5"/>
    <property type="match status" value="1"/>
</dbReference>
<dbReference type="Gene3D" id="1.10.220.10">
    <property type="entry name" value="Annexin"/>
    <property type="match status" value="4"/>
</dbReference>
<dbReference type="InterPro" id="IPR001464">
    <property type="entry name" value="Annexin"/>
</dbReference>
<dbReference type="InterPro" id="IPR018502">
    <property type="entry name" value="Annexin_repeat"/>
</dbReference>
<dbReference type="InterPro" id="IPR018252">
    <property type="entry name" value="Annexin_repeat_CS"/>
</dbReference>
<dbReference type="InterPro" id="IPR037104">
    <property type="entry name" value="Annexin_sf"/>
</dbReference>
<dbReference type="InterPro" id="IPR002391">
    <property type="entry name" value="ANX4"/>
</dbReference>
<dbReference type="PANTHER" id="PTHR10502">
    <property type="entry name" value="ANNEXIN"/>
    <property type="match status" value="1"/>
</dbReference>
<dbReference type="PANTHER" id="PTHR10502:SF28">
    <property type="entry name" value="ANNEXIN A4"/>
    <property type="match status" value="1"/>
</dbReference>
<dbReference type="Pfam" id="PF00191">
    <property type="entry name" value="Annexin"/>
    <property type="match status" value="4"/>
</dbReference>
<dbReference type="PRINTS" id="PR00196">
    <property type="entry name" value="ANNEXIN"/>
</dbReference>
<dbReference type="PRINTS" id="PR00200">
    <property type="entry name" value="ANNEXINIV"/>
</dbReference>
<dbReference type="SMART" id="SM00335">
    <property type="entry name" value="ANX"/>
    <property type="match status" value="4"/>
</dbReference>
<dbReference type="SUPFAM" id="SSF47874">
    <property type="entry name" value="Annexin"/>
    <property type="match status" value="1"/>
</dbReference>
<dbReference type="PROSITE" id="PS00223">
    <property type="entry name" value="ANNEXIN_1"/>
    <property type="match status" value="4"/>
</dbReference>
<dbReference type="PROSITE" id="PS51897">
    <property type="entry name" value="ANNEXIN_2"/>
    <property type="match status" value="4"/>
</dbReference>